<name>121R_IIV6</name>
<gene>
    <name type="ORF">IIV6-121R</name>
</gene>
<organism>
    <name type="scientific">Invertebrate iridescent virus 6</name>
    <name type="common">IIV-6</name>
    <name type="synonym">Chilo iridescent virus</name>
    <dbReference type="NCBI Taxonomy" id="176652"/>
    <lineage>
        <taxon>Viruses</taxon>
        <taxon>Varidnaviria</taxon>
        <taxon>Bamfordvirae</taxon>
        <taxon>Nucleocytoviricota</taxon>
        <taxon>Megaviricetes</taxon>
        <taxon>Pimascovirales</taxon>
        <taxon>Iridoviridae</taxon>
        <taxon>Betairidovirinae</taxon>
        <taxon>Iridovirus</taxon>
    </lineage>
</organism>
<feature type="chain" id="PRO_0000377906" description="Putative RING finger protein 121R">
    <location>
        <begin position="1"/>
        <end position="89"/>
    </location>
</feature>
<feature type="zinc finger region" description="RING-type" evidence="1">
    <location>
        <begin position="45"/>
        <end position="78"/>
    </location>
</feature>
<reference key="1">
    <citation type="journal article" date="2001" name="Virology">
        <title>Analysis of the first complete DNA sequence of an invertebrate iridovirus: coding strategy of the genome of Chilo iridescent virus.</title>
        <authorList>
            <person name="Jakob N.J."/>
            <person name="Mueller K."/>
            <person name="Bahr U."/>
            <person name="Darai G."/>
        </authorList>
    </citation>
    <scope>NUCLEOTIDE SEQUENCE [LARGE SCALE GENOMIC DNA]</scope>
</reference>
<reference key="2">
    <citation type="journal article" date="2007" name="Virol. J.">
        <title>Comparative genomic analysis of the family Iridoviridae: re-annotating and defining the core set of iridovirus genes.</title>
        <authorList>
            <person name="Eaton H.E."/>
            <person name="Metcalf J."/>
            <person name="Penny E."/>
            <person name="Tcherepanov V."/>
            <person name="Upton C."/>
            <person name="Brunetti C.R."/>
        </authorList>
    </citation>
    <scope>GENOME REANNOTATION</scope>
</reference>
<keyword id="KW-0479">Metal-binding</keyword>
<keyword id="KW-1185">Reference proteome</keyword>
<keyword id="KW-0862">Zinc</keyword>
<keyword id="KW-0863">Zinc-finger</keyword>
<sequence>MATIQIIIEEDNVTINVKKNQVPPIEVSPKIPPIEIENVKKNVLCPICLIAKVNTVLECTHVLCSNCVKKINVCPICRKTFQSINFFRL</sequence>
<dbReference type="EMBL" id="AF303741">
    <property type="protein sequence ID" value="AAB94446.1"/>
    <property type="molecule type" value="Genomic_DNA"/>
</dbReference>
<dbReference type="PIR" id="T03072">
    <property type="entry name" value="T03072"/>
</dbReference>
<dbReference type="RefSeq" id="NP_149584.1">
    <property type="nucleotide sequence ID" value="NC_003038.1"/>
</dbReference>
<dbReference type="SMR" id="O55735"/>
<dbReference type="KEGG" id="vg:1732973"/>
<dbReference type="OrthoDB" id="9255at10239"/>
<dbReference type="Proteomes" id="UP000001359">
    <property type="component" value="Genome"/>
</dbReference>
<dbReference type="GO" id="GO:0008270">
    <property type="term" value="F:zinc ion binding"/>
    <property type="evidence" value="ECO:0007669"/>
    <property type="project" value="UniProtKB-KW"/>
</dbReference>
<dbReference type="Gene3D" id="3.30.40.10">
    <property type="entry name" value="Zinc/RING finger domain, C3HC4 (zinc finger)"/>
    <property type="match status" value="1"/>
</dbReference>
<dbReference type="InterPro" id="IPR001841">
    <property type="entry name" value="Znf_RING"/>
</dbReference>
<dbReference type="InterPro" id="IPR013083">
    <property type="entry name" value="Znf_RING/FYVE/PHD"/>
</dbReference>
<dbReference type="InterPro" id="IPR017907">
    <property type="entry name" value="Znf_RING_CS"/>
</dbReference>
<dbReference type="Pfam" id="PF13920">
    <property type="entry name" value="zf-C3HC4_3"/>
    <property type="match status" value="1"/>
</dbReference>
<dbReference type="SMART" id="SM00184">
    <property type="entry name" value="RING"/>
    <property type="match status" value="1"/>
</dbReference>
<dbReference type="SUPFAM" id="SSF57850">
    <property type="entry name" value="RING/U-box"/>
    <property type="match status" value="1"/>
</dbReference>
<dbReference type="PROSITE" id="PS00518">
    <property type="entry name" value="ZF_RING_1"/>
    <property type="match status" value="1"/>
</dbReference>
<dbReference type="PROSITE" id="PS50089">
    <property type="entry name" value="ZF_RING_2"/>
    <property type="match status" value="1"/>
</dbReference>
<proteinExistence type="predicted"/>
<evidence type="ECO:0000255" key="1">
    <source>
        <dbReference type="PROSITE-ProRule" id="PRU00175"/>
    </source>
</evidence>
<protein>
    <recommendedName>
        <fullName>Putative RING finger protein 121R</fullName>
    </recommendedName>
</protein>
<accession>O55735</accession>
<organismHost>
    <name type="scientific">Acheta domesticus</name>
    <name type="common">House cricket</name>
    <dbReference type="NCBI Taxonomy" id="6997"/>
</organismHost>
<organismHost>
    <name type="scientific">Chilo suppressalis</name>
    <name type="common">Asiatic rice borer moth</name>
    <dbReference type="NCBI Taxonomy" id="168631"/>
</organismHost>
<organismHost>
    <name type="scientific">Gryllus bimaculatus</name>
    <name type="common">Two-spotted cricket</name>
    <dbReference type="NCBI Taxonomy" id="6999"/>
</organismHost>
<organismHost>
    <name type="scientific">Gryllus campestris</name>
    <dbReference type="NCBI Taxonomy" id="58607"/>
</organismHost>
<organismHost>
    <name type="scientific">Spodoptera frugiperda</name>
    <name type="common">Fall armyworm</name>
    <dbReference type="NCBI Taxonomy" id="7108"/>
</organismHost>